<sequence>MKIIHVLLLVAVVAITMSPSIMAESVAEADKPGQAKKIGLFDQIDKAAAAFMKLFEG</sequence>
<reference evidence="5" key="1">
    <citation type="journal article" date="2020" name="J. Proteome Res.">
        <title>Venom Peptide Repertoire of the European Myrmicine Ant Manica rubida: Identification of Insecticidal Toxins.</title>
        <authorList>
            <person name="Touchard A."/>
            <person name="Aili S.R."/>
            <person name="Tene N."/>
            <person name="Barasse V."/>
            <person name="Klopp C."/>
            <person name="Dejean A."/>
            <person name="Kini R.M."/>
            <person name="Mrinalini X."/>
            <person name="Coquet L."/>
            <person name="Jouenne T."/>
            <person name="Lefranc B."/>
            <person name="Leprince J."/>
            <person name="Escoubas P."/>
            <person name="Nicholson G.M."/>
            <person name="Treilhou M."/>
            <person name="Bonnafe E."/>
        </authorList>
    </citation>
    <scope>NUCLEOTIDE SEQUENCE [MRNA]</scope>
    <scope>FUNCTION</scope>
    <scope>SUBCELLULAR LOCATION</scope>
    <scope>TISSUE SPECIFICITY</scope>
    <scope>MASS SPECTROMETRY</scope>
    <scope>TOXIC DOSE</scope>
    <scope>AMIDATION AT GLU-56</scope>
    <source>
        <tissue>Venom</tissue>
        <tissue>Venom gland</tissue>
    </source>
</reference>
<organism evidence="5">
    <name type="scientific">Manica rubida</name>
    <name type="common">European giant red ant</name>
    <dbReference type="NCBI Taxonomy" id="219785"/>
    <lineage>
        <taxon>Eukaryota</taxon>
        <taxon>Metazoa</taxon>
        <taxon>Ecdysozoa</taxon>
        <taxon>Arthropoda</taxon>
        <taxon>Hexapoda</taxon>
        <taxon>Insecta</taxon>
        <taxon>Pterygota</taxon>
        <taxon>Neoptera</taxon>
        <taxon>Endopterygota</taxon>
        <taxon>Hymenoptera</taxon>
        <taxon>Apocrita</taxon>
        <taxon>Aculeata</taxon>
        <taxon>Formicoidea</taxon>
        <taxon>Formicidae</taxon>
        <taxon>Myrmicinae</taxon>
        <taxon>Manica</taxon>
    </lineage>
</organism>
<comment type="function">
    <text evidence="2">Induces paralysis 1 hour after injection into insects (blowfly L.caesar) but does not appear to be lethal.</text>
</comment>
<comment type="subcellular location">
    <subcellularLocation>
        <location evidence="2">Secreted</location>
    </subcellularLocation>
</comment>
<comment type="tissue specificity">
    <text evidence="2">Expressed by the venom gland.</text>
</comment>
<comment type="mass spectrometry"/>
<comment type="toxic dose">
    <text evidence="2">PD(50) is 2.9 +-0.9 nmol/g in blowfly (L.caesar) (at 1 hour post-injection).</text>
</comment>
<evidence type="ECO:0000255" key="1"/>
<evidence type="ECO:0000269" key="2">
    <source>
    </source>
</evidence>
<evidence type="ECO:0000303" key="3">
    <source>
    </source>
</evidence>
<evidence type="ECO:0000305" key="4">
    <source>
    </source>
</evidence>
<evidence type="ECO:0000312" key="5">
    <source>
        <dbReference type="EMBL" id="QIQ51451.1"/>
    </source>
</evidence>
<accession>A0A6G9KIT6</accession>
<dbReference type="EMBL" id="MN765041">
    <property type="protein sequence ID" value="QIQ51451.1"/>
    <property type="molecule type" value="mRNA"/>
</dbReference>
<dbReference type="GO" id="GO:0005576">
    <property type="term" value="C:extracellular region"/>
    <property type="evidence" value="ECO:0000314"/>
    <property type="project" value="UniProtKB"/>
</dbReference>
<dbReference type="GO" id="GO:0090729">
    <property type="term" value="F:toxin activity"/>
    <property type="evidence" value="ECO:0000314"/>
    <property type="project" value="UniProtKB"/>
</dbReference>
<dbReference type="GO" id="GO:0044616">
    <property type="term" value="P:venom-mediated paralysis in another organism"/>
    <property type="evidence" value="ECO:0000314"/>
    <property type="project" value="UniProtKB"/>
</dbReference>
<protein>
    <recommendedName>
        <fullName evidence="3">U13-myrmicitoxin-Mri1a</fullName>
        <shortName evidence="3">U13-MYRTX-Mri1a</shortName>
    </recommendedName>
</protein>
<proteinExistence type="evidence at protein level"/>
<keyword id="KW-0027">Amidation</keyword>
<keyword id="KW-0929">Antimicrobial</keyword>
<keyword id="KW-0964">Secreted</keyword>
<keyword id="KW-0732">Signal</keyword>
<keyword id="KW-0800">Toxin</keyword>
<feature type="signal peptide" evidence="1">
    <location>
        <begin position="1"/>
        <end position="23"/>
    </location>
</feature>
<feature type="propeptide" id="PRO_0000453065" evidence="4">
    <location>
        <begin position="24"/>
        <end position="29"/>
    </location>
</feature>
<feature type="peptide" id="PRO_0000453066" description="U13-myrmicitoxin-Mri1a" evidence="2">
    <location>
        <begin position="30"/>
        <end position="56"/>
    </location>
</feature>
<feature type="modified residue" description="Glutamic acid 1-amide" evidence="4">
    <location>
        <position position="56"/>
    </location>
</feature>
<name>TX13A_MANRB</name>